<keyword id="KW-0233">DNA recombination</keyword>
<keyword id="KW-0238">DNA-binding</keyword>
<keyword id="KW-1185">Reference proteome</keyword>
<keyword id="KW-0804">Transcription</keyword>
<keyword id="KW-0805">Transcription regulation</keyword>
<keyword id="KW-0810">Translation regulation</keyword>
<dbReference type="EMBL" id="CP000699">
    <property type="protein sequence ID" value="ABQ69903.1"/>
    <property type="molecule type" value="Genomic_DNA"/>
</dbReference>
<dbReference type="SMR" id="A5VC87"/>
<dbReference type="STRING" id="392499.Swit_3557"/>
<dbReference type="PaxDb" id="392499-Swit_3557"/>
<dbReference type="KEGG" id="swi:Swit_3557"/>
<dbReference type="eggNOG" id="COG0776">
    <property type="taxonomic scope" value="Bacteria"/>
</dbReference>
<dbReference type="HOGENOM" id="CLU_105066_1_1_5"/>
<dbReference type="OrthoDB" id="9797747at2"/>
<dbReference type="Proteomes" id="UP000001989">
    <property type="component" value="Chromosome"/>
</dbReference>
<dbReference type="GO" id="GO:0005829">
    <property type="term" value="C:cytosol"/>
    <property type="evidence" value="ECO:0007669"/>
    <property type="project" value="TreeGrafter"/>
</dbReference>
<dbReference type="GO" id="GO:0003677">
    <property type="term" value="F:DNA binding"/>
    <property type="evidence" value="ECO:0007669"/>
    <property type="project" value="UniProtKB-UniRule"/>
</dbReference>
<dbReference type="GO" id="GO:0030527">
    <property type="term" value="F:structural constituent of chromatin"/>
    <property type="evidence" value="ECO:0007669"/>
    <property type="project" value="InterPro"/>
</dbReference>
<dbReference type="GO" id="GO:0006310">
    <property type="term" value="P:DNA recombination"/>
    <property type="evidence" value="ECO:0007669"/>
    <property type="project" value="UniProtKB-UniRule"/>
</dbReference>
<dbReference type="GO" id="GO:0009893">
    <property type="term" value="P:positive regulation of metabolic process"/>
    <property type="evidence" value="ECO:0007669"/>
    <property type="project" value="UniProtKB-ARBA"/>
</dbReference>
<dbReference type="GO" id="GO:0006355">
    <property type="term" value="P:regulation of DNA-templated transcription"/>
    <property type="evidence" value="ECO:0007669"/>
    <property type="project" value="UniProtKB-UniRule"/>
</dbReference>
<dbReference type="GO" id="GO:0006417">
    <property type="term" value="P:regulation of translation"/>
    <property type="evidence" value="ECO:0007669"/>
    <property type="project" value="UniProtKB-UniRule"/>
</dbReference>
<dbReference type="CDD" id="cd13835">
    <property type="entry name" value="IHF_A"/>
    <property type="match status" value="1"/>
</dbReference>
<dbReference type="Gene3D" id="4.10.520.10">
    <property type="entry name" value="IHF-like DNA-binding proteins"/>
    <property type="match status" value="1"/>
</dbReference>
<dbReference type="HAMAP" id="MF_00380">
    <property type="entry name" value="IHF_alpha"/>
    <property type="match status" value="1"/>
</dbReference>
<dbReference type="InterPro" id="IPR000119">
    <property type="entry name" value="Hist_DNA-bd"/>
</dbReference>
<dbReference type="InterPro" id="IPR020816">
    <property type="entry name" value="Histone-like_DNA-bd_CS"/>
</dbReference>
<dbReference type="InterPro" id="IPR010992">
    <property type="entry name" value="IHF-like_DNA-bd_dom_sf"/>
</dbReference>
<dbReference type="InterPro" id="IPR005684">
    <property type="entry name" value="IHF_alpha"/>
</dbReference>
<dbReference type="NCBIfam" id="TIGR00987">
    <property type="entry name" value="himA"/>
    <property type="match status" value="1"/>
</dbReference>
<dbReference type="NCBIfam" id="NF001401">
    <property type="entry name" value="PRK00285.1"/>
    <property type="match status" value="1"/>
</dbReference>
<dbReference type="PANTHER" id="PTHR33175">
    <property type="entry name" value="DNA-BINDING PROTEIN HU"/>
    <property type="match status" value="1"/>
</dbReference>
<dbReference type="PANTHER" id="PTHR33175:SF2">
    <property type="entry name" value="INTEGRATION HOST FACTOR SUBUNIT ALPHA"/>
    <property type="match status" value="1"/>
</dbReference>
<dbReference type="Pfam" id="PF00216">
    <property type="entry name" value="Bac_DNA_binding"/>
    <property type="match status" value="1"/>
</dbReference>
<dbReference type="PRINTS" id="PR01727">
    <property type="entry name" value="DNABINDINGHU"/>
</dbReference>
<dbReference type="SMART" id="SM00411">
    <property type="entry name" value="BHL"/>
    <property type="match status" value="1"/>
</dbReference>
<dbReference type="SUPFAM" id="SSF47729">
    <property type="entry name" value="IHF-like DNA-binding proteins"/>
    <property type="match status" value="1"/>
</dbReference>
<dbReference type="PROSITE" id="PS00045">
    <property type="entry name" value="HISTONE_LIKE"/>
    <property type="match status" value="1"/>
</dbReference>
<name>IHFA_RHIWR</name>
<protein>
    <recommendedName>
        <fullName evidence="1">Integration host factor subunit alpha</fullName>
        <shortName evidence="1">IHF-alpha</shortName>
    </recommendedName>
</protein>
<sequence>MALDRGTLTRADLSEEVHREIGLSRADSAAVVEQVLEHMCLALARGENVKISGFGSFILREKGQRIGRNPKTGVEVPIAPRRVLTFRASQMLRDRIVSGN</sequence>
<gene>
    <name evidence="1" type="primary">ihfA</name>
    <name evidence="1" type="synonym">himA</name>
    <name type="ordered locus">Swit_3557</name>
</gene>
<accession>A5VC87</accession>
<feature type="chain" id="PRO_1000060576" description="Integration host factor subunit alpha">
    <location>
        <begin position="1"/>
        <end position="100"/>
    </location>
</feature>
<organism>
    <name type="scientific">Rhizorhabdus wittichii (strain DSM 6014 / CCUG 31198 / JCM 15750 / NBRC 105917 / EY 4224 / RW1)</name>
    <name type="common">Sphingomonas wittichii</name>
    <dbReference type="NCBI Taxonomy" id="392499"/>
    <lineage>
        <taxon>Bacteria</taxon>
        <taxon>Pseudomonadati</taxon>
        <taxon>Pseudomonadota</taxon>
        <taxon>Alphaproteobacteria</taxon>
        <taxon>Sphingomonadales</taxon>
        <taxon>Sphingomonadaceae</taxon>
        <taxon>Rhizorhabdus</taxon>
    </lineage>
</organism>
<evidence type="ECO:0000255" key="1">
    <source>
        <dbReference type="HAMAP-Rule" id="MF_00380"/>
    </source>
</evidence>
<comment type="function">
    <text evidence="1">This protein is one of the two subunits of integration host factor, a specific DNA-binding protein that functions in genetic recombination as well as in transcriptional and translational control.</text>
</comment>
<comment type="subunit">
    <text evidence="1">Heterodimer of an alpha and a beta chain.</text>
</comment>
<comment type="similarity">
    <text evidence="1">Belongs to the bacterial histone-like protein family.</text>
</comment>
<proteinExistence type="inferred from homology"/>
<reference key="1">
    <citation type="journal article" date="2010" name="J. Bacteriol.">
        <title>Genome sequence of the dioxin-mineralizing bacterium Sphingomonas wittichii RW1.</title>
        <authorList>
            <person name="Miller T.R."/>
            <person name="Delcher A.L."/>
            <person name="Salzberg S.L."/>
            <person name="Saunders E."/>
            <person name="Detter J.C."/>
            <person name="Halden R.U."/>
        </authorList>
    </citation>
    <scope>NUCLEOTIDE SEQUENCE [LARGE SCALE GENOMIC DNA]</scope>
    <source>
        <strain>DSM 6014 / CCUG 31198 / JCM 15750 / NBRC 105917 / EY 4224 / RW1</strain>
    </source>
</reference>